<evidence type="ECO:0000255" key="1">
    <source>
        <dbReference type="HAMAP-Rule" id="MF_01658"/>
    </source>
</evidence>
<comment type="function">
    <text evidence="1">Catalyzes the hydroxylation of 2-nonaprenyl-3-methyl-6-methoxy-1,4-benzoquinol during ubiquinone biosynthesis.</text>
</comment>
<comment type="catalytic activity">
    <reaction evidence="1">
        <text>a 5-methoxy-2-methyl-3-(all-trans-polyprenyl)benzene-1,4-diol + AH2 + O2 = a 3-demethylubiquinol + A + H2O</text>
        <dbReference type="Rhea" id="RHEA:50908"/>
        <dbReference type="Rhea" id="RHEA-COMP:10859"/>
        <dbReference type="Rhea" id="RHEA-COMP:10914"/>
        <dbReference type="ChEBI" id="CHEBI:13193"/>
        <dbReference type="ChEBI" id="CHEBI:15377"/>
        <dbReference type="ChEBI" id="CHEBI:15379"/>
        <dbReference type="ChEBI" id="CHEBI:17499"/>
        <dbReference type="ChEBI" id="CHEBI:84167"/>
        <dbReference type="ChEBI" id="CHEBI:84422"/>
        <dbReference type="EC" id="1.14.99.60"/>
    </reaction>
</comment>
<comment type="cofactor">
    <cofactor evidence="1">
        <name>Fe cation</name>
        <dbReference type="ChEBI" id="CHEBI:24875"/>
    </cofactor>
    <text evidence="1">Binds 2 iron ions per subunit.</text>
</comment>
<comment type="pathway">
    <text evidence="1">Cofactor biosynthesis; ubiquinone biosynthesis.</text>
</comment>
<comment type="subcellular location">
    <subcellularLocation>
        <location evidence="1">Cell membrane</location>
        <topology evidence="1">Peripheral membrane protein</topology>
    </subcellularLocation>
</comment>
<comment type="similarity">
    <text evidence="1">Belongs to the COQ7 family.</text>
</comment>
<name>COQ7_STUS1</name>
<proteinExistence type="inferred from homology"/>
<dbReference type="EC" id="1.14.99.60" evidence="1"/>
<dbReference type="EMBL" id="CP000304">
    <property type="protein sequence ID" value="ABP78455.1"/>
    <property type="molecule type" value="Genomic_DNA"/>
</dbReference>
<dbReference type="RefSeq" id="WP_011911962.1">
    <property type="nucleotide sequence ID" value="NC_009434.1"/>
</dbReference>
<dbReference type="SMR" id="A4VHK4"/>
<dbReference type="KEGG" id="psa:PST_0750"/>
<dbReference type="eggNOG" id="COG2941">
    <property type="taxonomic scope" value="Bacteria"/>
</dbReference>
<dbReference type="HOGENOM" id="CLU_088601_0_0_6"/>
<dbReference type="UniPathway" id="UPA00232"/>
<dbReference type="Proteomes" id="UP000000233">
    <property type="component" value="Chromosome"/>
</dbReference>
<dbReference type="GO" id="GO:0005886">
    <property type="term" value="C:plasma membrane"/>
    <property type="evidence" value="ECO:0007669"/>
    <property type="project" value="UniProtKB-SubCell"/>
</dbReference>
<dbReference type="GO" id="GO:0008682">
    <property type="term" value="F:3-demethoxyubiquinol 3-hydroxylase activity"/>
    <property type="evidence" value="ECO:0007669"/>
    <property type="project" value="UniProtKB-EC"/>
</dbReference>
<dbReference type="GO" id="GO:0046872">
    <property type="term" value="F:metal ion binding"/>
    <property type="evidence" value="ECO:0007669"/>
    <property type="project" value="UniProtKB-KW"/>
</dbReference>
<dbReference type="GO" id="GO:0006744">
    <property type="term" value="P:ubiquinone biosynthetic process"/>
    <property type="evidence" value="ECO:0007669"/>
    <property type="project" value="UniProtKB-UniRule"/>
</dbReference>
<dbReference type="CDD" id="cd01042">
    <property type="entry name" value="DMQH"/>
    <property type="match status" value="1"/>
</dbReference>
<dbReference type="FunFam" id="1.20.1260.10:FF:000013">
    <property type="entry name" value="2-nonaprenyl-3-methyl-6-methoxy-1,4-benzoquinol hydroxylase"/>
    <property type="match status" value="1"/>
</dbReference>
<dbReference type="Gene3D" id="1.20.1260.10">
    <property type="match status" value="1"/>
</dbReference>
<dbReference type="HAMAP" id="MF_01658">
    <property type="entry name" value="COQ7"/>
    <property type="match status" value="1"/>
</dbReference>
<dbReference type="InterPro" id="IPR047809">
    <property type="entry name" value="COQ7_proteobact"/>
</dbReference>
<dbReference type="InterPro" id="IPR012347">
    <property type="entry name" value="Ferritin-like"/>
</dbReference>
<dbReference type="InterPro" id="IPR009078">
    <property type="entry name" value="Ferritin-like_SF"/>
</dbReference>
<dbReference type="InterPro" id="IPR011566">
    <property type="entry name" value="Ubq_synth_Coq7"/>
</dbReference>
<dbReference type="NCBIfam" id="NF033656">
    <property type="entry name" value="DMQ_monoox_COQ7"/>
    <property type="match status" value="1"/>
</dbReference>
<dbReference type="PANTHER" id="PTHR11237:SF4">
    <property type="entry name" value="5-DEMETHOXYUBIQUINONE HYDROXYLASE, MITOCHONDRIAL"/>
    <property type="match status" value="1"/>
</dbReference>
<dbReference type="PANTHER" id="PTHR11237">
    <property type="entry name" value="COENZYME Q10 BIOSYNTHESIS PROTEIN 7"/>
    <property type="match status" value="1"/>
</dbReference>
<dbReference type="Pfam" id="PF03232">
    <property type="entry name" value="COQ7"/>
    <property type="match status" value="1"/>
</dbReference>
<dbReference type="SUPFAM" id="SSF47240">
    <property type="entry name" value="Ferritin-like"/>
    <property type="match status" value="1"/>
</dbReference>
<accession>A4VHK4</accession>
<keyword id="KW-1003">Cell membrane</keyword>
<keyword id="KW-0408">Iron</keyword>
<keyword id="KW-0472">Membrane</keyword>
<keyword id="KW-0479">Metal-binding</keyword>
<keyword id="KW-0503">Monooxygenase</keyword>
<keyword id="KW-0560">Oxidoreductase</keyword>
<keyword id="KW-1185">Reference proteome</keyword>
<keyword id="KW-0831">Ubiquinone biosynthesis</keyword>
<sequence length="215" mass="23459">MPSQRHYSPADRLLMQADAALRTLLPFSGQPSRPSPALLKTEAELSESEARHVAGLMRINHTGEVCAQALYQGQALTARLPQVRQAMEQAADEEIDHLAWCEQRIRQLGSHTSVLNPIFYGLSFGIGASAGLISDRISLGFVAATEDQVCKHLDDHLGQLPAGDEKSRAILEQMREDEAQHSTAAIEAGGLRFPAPVKFGMSLVSKVMTKATYRI</sequence>
<reference key="1">
    <citation type="journal article" date="2008" name="Proc. Natl. Acad. Sci. U.S.A.">
        <title>Nitrogen fixation island and rhizosphere competence traits in the genome of root-associated Pseudomonas stutzeri A1501.</title>
        <authorList>
            <person name="Yan Y."/>
            <person name="Yang J."/>
            <person name="Dou Y."/>
            <person name="Chen M."/>
            <person name="Ping S."/>
            <person name="Peng J."/>
            <person name="Lu W."/>
            <person name="Zhang W."/>
            <person name="Yao Z."/>
            <person name="Li H."/>
            <person name="Liu W."/>
            <person name="He S."/>
            <person name="Geng L."/>
            <person name="Zhang X."/>
            <person name="Yang F."/>
            <person name="Yu H."/>
            <person name="Zhan Y."/>
            <person name="Li D."/>
            <person name="Lin Z."/>
            <person name="Wang Y."/>
            <person name="Elmerich C."/>
            <person name="Lin M."/>
            <person name="Jin Q."/>
        </authorList>
    </citation>
    <scope>NUCLEOTIDE SEQUENCE [LARGE SCALE GENOMIC DNA]</scope>
    <source>
        <strain>A1501</strain>
    </source>
</reference>
<gene>
    <name evidence="1" type="primary">coq7</name>
    <name type="ordered locus">PST_0750</name>
</gene>
<feature type="chain" id="PRO_0000338718" description="3-demethoxyubiquinol 3-hydroxylase">
    <location>
        <begin position="1"/>
        <end position="215"/>
    </location>
</feature>
<feature type="binding site" evidence="1">
    <location>
        <position position="64"/>
    </location>
    <ligand>
        <name>Fe cation</name>
        <dbReference type="ChEBI" id="CHEBI:24875"/>
        <label>1</label>
    </ligand>
</feature>
<feature type="binding site" evidence="1">
    <location>
        <position position="94"/>
    </location>
    <ligand>
        <name>Fe cation</name>
        <dbReference type="ChEBI" id="CHEBI:24875"/>
        <label>1</label>
    </ligand>
</feature>
<feature type="binding site" evidence="1">
    <location>
        <position position="94"/>
    </location>
    <ligand>
        <name>Fe cation</name>
        <dbReference type="ChEBI" id="CHEBI:24875"/>
        <label>2</label>
    </ligand>
</feature>
<feature type="binding site" evidence="1">
    <location>
        <position position="97"/>
    </location>
    <ligand>
        <name>Fe cation</name>
        <dbReference type="ChEBI" id="CHEBI:24875"/>
        <label>1</label>
    </ligand>
</feature>
<feature type="binding site" evidence="1">
    <location>
        <position position="146"/>
    </location>
    <ligand>
        <name>Fe cation</name>
        <dbReference type="ChEBI" id="CHEBI:24875"/>
        <label>2</label>
    </ligand>
</feature>
<feature type="binding site" evidence="1">
    <location>
        <position position="178"/>
    </location>
    <ligand>
        <name>Fe cation</name>
        <dbReference type="ChEBI" id="CHEBI:24875"/>
        <label>1</label>
    </ligand>
</feature>
<feature type="binding site" evidence="1">
    <location>
        <position position="178"/>
    </location>
    <ligand>
        <name>Fe cation</name>
        <dbReference type="ChEBI" id="CHEBI:24875"/>
        <label>2</label>
    </ligand>
</feature>
<feature type="binding site" evidence="1">
    <location>
        <position position="181"/>
    </location>
    <ligand>
        <name>Fe cation</name>
        <dbReference type="ChEBI" id="CHEBI:24875"/>
        <label>2</label>
    </ligand>
</feature>
<protein>
    <recommendedName>
        <fullName evidence="1">3-demethoxyubiquinol 3-hydroxylase</fullName>
        <shortName evidence="1">DMQ hydroxylase</shortName>
        <ecNumber evidence="1">1.14.99.60</ecNumber>
    </recommendedName>
    <alternativeName>
        <fullName evidence="1">2-nonaprenyl-3-methyl-6-methoxy-1,4-benzoquinol hydroxylase</fullName>
    </alternativeName>
</protein>
<organism>
    <name type="scientific">Stutzerimonas stutzeri (strain A1501)</name>
    <name type="common">Pseudomonas stutzeri</name>
    <dbReference type="NCBI Taxonomy" id="379731"/>
    <lineage>
        <taxon>Bacteria</taxon>
        <taxon>Pseudomonadati</taxon>
        <taxon>Pseudomonadota</taxon>
        <taxon>Gammaproteobacteria</taxon>
        <taxon>Pseudomonadales</taxon>
        <taxon>Pseudomonadaceae</taxon>
        <taxon>Stutzerimonas</taxon>
    </lineage>
</organism>